<reference key="1">
    <citation type="journal article" date="2008" name="J. Bacteriol.">
        <title>Comparative genome sequence analysis of multidrug-resistant Acinetobacter baumannii.</title>
        <authorList>
            <person name="Adams M.D."/>
            <person name="Goglin K."/>
            <person name="Molyneaux N."/>
            <person name="Hujer K.M."/>
            <person name="Lavender H."/>
            <person name="Jamison J.J."/>
            <person name="MacDonald I.J."/>
            <person name="Martin K.M."/>
            <person name="Russo T."/>
            <person name="Campagnari A.A."/>
            <person name="Hujer A.M."/>
            <person name="Bonomo R.A."/>
            <person name="Gill S.R."/>
        </authorList>
    </citation>
    <scope>NUCLEOTIDE SEQUENCE [LARGE SCALE GENOMIC DNA]</scope>
    <source>
        <strain>AB307-0294</strain>
    </source>
</reference>
<organism>
    <name type="scientific">Acinetobacter baumannii (strain AB307-0294)</name>
    <dbReference type="NCBI Taxonomy" id="557600"/>
    <lineage>
        <taxon>Bacteria</taxon>
        <taxon>Pseudomonadati</taxon>
        <taxon>Pseudomonadota</taxon>
        <taxon>Gammaproteobacteria</taxon>
        <taxon>Moraxellales</taxon>
        <taxon>Moraxellaceae</taxon>
        <taxon>Acinetobacter</taxon>
        <taxon>Acinetobacter calcoaceticus/baumannii complex</taxon>
    </lineage>
</organism>
<evidence type="ECO:0000255" key="1">
    <source>
        <dbReference type="HAMAP-Rule" id="MF_00031"/>
    </source>
</evidence>
<keyword id="KW-0963">Cytoplasm</keyword>
<keyword id="KW-0227">DNA damage</keyword>
<keyword id="KW-0233">DNA recombination</keyword>
<keyword id="KW-0234">DNA repair</keyword>
<keyword id="KW-0238">DNA-binding</keyword>
<proteinExistence type="inferred from homology"/>
<dbReference type="EMBL" id="CP001172">
    <property type="protein sequence ID" value="ACJ57159.1"/>
    <property type="molecule type" value="Genomic_DNA"/>
</dbReference>
<dbReference type="RefSeq" id="WP_000578663.1">
    <property type="nucleotide sequence ID" value="NZ_CP001172.1"/>
</dbReference>
<dbReference type="SMR" id="B7GYB6"/>
<dbReference type="GeneID" id="92894860"/>
<dbReference type="HOGENOM" id="CLU_087936_0_0_6"/>
<dbReference type="Proteomes" id="UP000006924">
    <property type="component" value="Chromosome"/>
</dbReference>
<dbReference type="GO" id="GO:0005737">
    <property type="term" value="C:cytoplasm"/>
    <property type="evidence" value="ECO:0007669"/>
    <property type="project" value="UniProtKB-SubCell"/>
</dbReference>
<dbReference type="GO" id="GO:0009379">
    <property type="term" value="C:Holliday junction helicase complex"/>
    <property type="evidence" value="ECO:0007669"/>
    <property type="project" value="InterPro"/>
</dbReference>
<dbReference type="GO" id="GO:0048476">
    <property type="term" value="C:Holliday junction resolvase complex"/>
    <property type="evidence" value="ECO:0007669"/>
    <property type="project" value="UniProtKB-UniRule"/>
</dbReference>
<dbReference type="GO" id="GO:0005524">
    <property type="term" value="F:ATP binding"/>
    <property type="evidence" value="ECO:0007669"/>
    <property type="project" value="InterPro"/>
</dbReference>
<dbReference type="GO" id="GO:0000400">
    <property type="term" value="F:four-way junction DNA binding"/>
    <property type="evidence" value="ECO:0007669"/>
    <property type="project" value="UniProtKB-UniRule"/>
</dbReference>
<dbReference type="GO" id="GO:0009378">
    <property type="term" value="F:four-way junction helicase activity"/>
    <property type="evidence" value="ECO:0007669"/>
    <property type="project" value="InterPro"/>
</dbReference>
<dbReference type="GO" id="GO:0006310">
    <property type="term" value="P:DNA recombination"/>
    <property type="evidence" value="ECO:0007669"/>
    <property type="project" value="UniProtKB-UniRule"/>
</dbReference>
<dbReference type="GO" id="GO:0006281">
    <property type="term" value="P:DNA repair"/>
    <property type="evidence" value="ECO:0007669"/>
    <property type="project" value="UniProtKB-UniRule"/>
</dbReference>
<dbReference type="Gene3D" id="1.10.150.20">
    <property type="entry name" value="5' to 3' exonuclease, C-terminal subdomain"/>
    <property type="match status" value="1"/>
</dbReference>
<dbReference type="Gene3D" id="1.10.8.10">
    <property type="entry name" value="DNA helicase RuvA subunit, C-terminal domain"/>
    <property type="match status" value="1"/>
</dbReference>
<dbReference type="Gene3D" id="2.40.50.140">
    <property type="entry name" value="Nucleic acid-binding proteins"/>
    <property type="match status" value="1"/>
</dbReference>
<dbReference type="HAMAP" id="MF_00031">
    <property type="entry name" value="DNA_HJ_migration_RuvA"/>
    <property type="match status" value="1"/>
</dbReference>
<dbReference type="InterPro" id="IPR013849">
    <property type="entry name" value="DNA_helicase_Holl-junc_RuvA_I"/>
</dbReference>
<dbReference type="InterPro" id="IPR003583">
    <property type="entry name" value="Hlx-hairpin-Hlx_DNA-bd_motif"/>
</dbReference>
<dbReference type="InterPro" id="IPR012340">
    <property type="entry name" value="NA-bd_OB-fold"/>
</dbReference>
<dbReference type="InterPro" id="IPR000085">
    <property type="entry name" value="RuvA"/>
</dbReference>
<dbReference type="InterPro" id="IPR010994">
    <property type="entry name" value="RuvA_2-like"/>
</dbReference>
<dbReference type="InterPro" id="IPR011114">
    <property type="entry name" value="RuvA_C"/>
</dbReference>
<dbReference type="InterPro" id="IPR036267">
    <property type="entry name" value="RuvA_C_sf"/>
</dbReference>
<dbReference type="NCBIfam" id="TIGR00084">
    <property type="entry name" value="ruvA"/>
    <property type="match status" value="1"/>
</dbReference>
<dbReference type="Pfam" id="PF14520">
    <property type="entry name" value="HHH_5"/>
    <property type="match status" value="1"/>
</dbReference>
<dbReference type="Pfam" id="PF07499">
    <property type="entry name" value="RuvA_C"/>
    <property type="match status" value="1"/>
</dbReference>
<dbReference type="Pfam" id="PF01330">
    <property type="entry name" value="RuvA_N"/>
    <property type="match status" value="1"/>
</dbReference>
<dbReference type="SMART" id="SM00278">
    <property type="entry name" value="HhH1"/>
    <property type="match status" value="2"/>
</dbReference>
<dbReference type="SUPFAM" id="SSF46929">
    <property type="entry name" value="DNA helicase RuvA subunit, C-terminal domain"/>
    <property type="match status" value="1"/>
</dbReference>
<dbReference type="SUPFAM" id="SSF50249">
    <property type="entry name" value="Nucleic acid-binding proteins"/>
    <property type="match status" value="1"/>
</dbReference>
<dbReference type="SUPFAM" id="SSF47781">
    <property type="entry name" value="RuvA domain 2-like"/>
    <property type="match status" value="1"/>
</dbReference>
<sequence length="199" mass="21527">MIGCLIGEVFALEAPTVLLNVNGVGYEIDTPLSTFCQLQKGQKVTLWTHLVVREDAQQLYGFSDAQEKTIFRTLLKVNGVGPKMALGILSTLSVELLVHTIEHDDVNTLVKVPGVGKKTAERLMIELRDRFKTLAQGTSSAAALPQIQFVSNSPVAEAEAALQSLGYKPLEAQKAVAAVKADYTESADIIRAALKSMMK</sequence>
<gene>
    <name evidence="1" type="primary">ruvA</name>
    <name type="ordered locus">ABBFA_000893</name>
</gene>
<name>RUVA_ACIB3</name>
<protein>
    <recommendedName>
        <fullName evidence="1">Holliday junction branch migration complex subunit RuvA</fullName>
    </recommendedName>
</protein>
<feature type="chain" id="PRO_1000116443" description="Holliday junction branch migration complex subunit RuvA">
    <location>
        <begin position="1"/>
        <end position="199"/>
    </location>
</feature>
<feature type="region of interest" description="Domain I" evidence="1">
    <location>
        <begin position="1"/>
        <end position="63"/>
    </location>
</feature>
<feature type="region of interest" description="Domain II" evidence="1">
    <location>
        <begin position="64"/>
        <end position="142"/>
    </location>
</feature>
<feature type="region of interest" description="Flexible linker" evidence="1">
    <location>
        <begin position="143"/>
        <end position="150"/>
    </location>
</feature>
<feature type="region of interest" description="Domain III" evidence="1">
    <location>
        <begin position="150"/>
        <end position="199"/>
    </location>
</feature>
<accession>B7GYB6</accession>
<comment type="function">
    <text evidence="1">The RuvA-RuvB-RuvC complex processes Holliday junction (HJ) DNA during genetic recombination and DNA repair, while the RuvA-RuvB complex plays an important role in the rescue of blocked DNA replication forks via replication fork reversal (RFR). RuvA specifically binds to HJ cruciform DNA, conferring on it an open structure. The RuvB hexamer acts as an ATP-dependent pump, pulling dsDNA into and through the RuvAB complex. HJ branch migration allows RuvC to scan DNA until it finds its consensus sequence, where it cleaves and resolves the cruciform DNA.</text>
</comment>
<comment type="subunit">
    <text evidence="1">Homotetramer. Forms an RuvA(8)-RuvB(12)-Holliday junction (HJ) complex. HJ DNA is sandwiched between 2 RuvA tetramers; dsDNA enters through RuvA and exits via RuvB. An RuvB hexamer assembles on each DNA strand where it exits the tetramer. Each RuvB hexamer is contacted by two RuvA subunits (via domain III) on 2 adjacent RuvB subunits; this complex drives branch migration. In the full resolvosome a probable DNA-RuvA(4)-RuvB(12)-RuvC(2) complex forms which resolves the HJ.</text>
</comment>
<comment type="subcellular location">
    <subcellularLocation>
        <location evidence="1">Cytoplasm</location>
    </subcellularLocation>
</comment>
<comment type="domain">
    <text evidence="1">Has three domains with a flexible linker between the domains II and III and assumes an 'L' shape. Domain III is highly mobile and contacts RuvB.</text>
</comment>
<comment type="similarity">
    <text evidence="1">Belongs to the RuvA family.</text>
</comment>